<comment type="function">
    <text evidence="1">Responsible for the release of ribosomes from messenger RNA at the termination of protein biosynthesis. May increase the efficiency of translation by recycling ribosomes from one round of translation to another.</text>
</comment>
<comment type="subcellular location">
    <subcellularLocation>
        <location evidence="1">Cytoplasm</location>
    </subcellularLocation>
</comment>
<comment type="similarity">
    <text evidence="1">Belongs to the RRF family.</text>
</comment>
<gene>
    <name evidence="1" type="primary">frr</name>
    <name type="ordered locus">Syncc9902_1649</name>
</gene>
<accession>Q3AV97</accession>
<name>RRF_SYNS9</name>
<reference key="1">
    <citation type="submission" date="2005-08" db="EMBL/GenBank/DDBJ databases">
        <title>Complete sequence of Synechococcus sp. CC9902.</title>
        <authorList>
            <person name="Copeland A."/>
            <person name="Lucas S."/>
            <person name="Lapidus A."/>
            <person name="Barry K."/>
            <person name="Detter J.C."/>
            <person name="Glavina T."/>
            <person name="Hammon N."/>
            <person name="Israni S."/>
            <person name="Pitluck S."/>
            <person name="Martinez M."/>
            <person name="Schmutz J."/>
            <person name="Larimer F."/>
            <person name="Land M."/>
            <person name="Kyrpides N."/>
            <person name="Ivanova N."/>
            <person name="Richardson P."/>
        </authorList>
    </citation>
    <scope>NUCLEOTIDE SEQUENCE [LARGE SCALE GENOMIC DNA]</scope>
    <source>
        <strain>CC9902</strain>
    </source>
</reference>
<proteinExistence type="inferred from homology"/>
<protein>
    <recommendedName>
        <fullName evidence="1">Ribosome-recycling factor</fullName>
        <shortName evidence="1">RRF</shortName>
    </recommendedName>
    <alternativeName>
        <fullName evidence="1">Ribosome-releasing factor</fullName>
    </alternativeName>
</protein>
<feature type="chain" id="PRO_1000003299" description="Ribosome-recycling factor">
    <location>
        <begin position="1"/>
        <end position="182"/>
    </location>
</feature>
<feature type="region of interest" description="Disordered" evidence="2">
    <location>
        <begin position="136"/>
        <end position="156"/>
    </location>
</feature>
<dbReference type="EMBL" id="CP000097">
    <property type="protein sequence ID" value="ABB26607.1"/>
    <property type="molecule type" value="Genomic_DNA"/>
</dbReference>
<dbReference type="RefSeq" id="WP_011360418.1">
    <property type="nucleotide sequence ID" value="NC_007513.1"/>
</dbReference>
<dbReference type="SMR" id="Q3AV97"/>
<dbReference type="STRING" id="316279.Syncc9902_1649"/>
<dbReference type="KEGG" id="sye:Syncc9902_1649"/>
<dbReference type="eggNOG" id="COG0233">
    <property type="taxonomic scope" value="Bacteria"/>
</dbReference>
<dbReference type="HOGENOM" id="CLU_073981_2_0_3"/>
<dbReference type="OrthoDB" id="9804006at2"/>
<dbReference type="Proteomes" id="UP000002712">
    <property type="component" value="Chromosome"/>
</dbReference>
<dbReference type="GO" id="GO:0005737">
    <property type="term" value="C:cytoplasm"/>
    <property type="evidence" value="ECO:0007669"/>
    <property type="project" value="UniProtKB-SubCell"/>
</dbReference>
<dbReference type="GO" id="GO:0043023">
    <property type="term" value="F:ribosomal large subunit binding"/>
    <property type="evidence" value="ECO:0007669"/>
    <property type="project" value="TreeGrafter"/>
</dbReference>
<dbReference type="GO" id="GO:0006415">
    <property type="term" value="P:translational termination"/>
    <property type="evidence" value="ECO:0007669"/>
    <property type="project" value="UniProtKB-UniRule"/>
</dbReference>
<dbReference type="CDD" id="cd00520">
    <property type="entry name" value="RRF"/>
    <property type="match status" value="1"/>
</dbReference>
<dbReference type="FunFam" id="1.10.132.20:FF:000001">
    <property type="entry name" value="Ribosome-recycling factor"/>
    <property type="match status" value="1"/>
</dbReference>
<dbReference type="FunFam" id="3.30.1360.40:FF:000001">
    <property type="entry name" value="Ribosome-recycling factor"/>
    <property type="match status" value="1"/>
</dbReference>
<dbReference type="Gene3D" id="3.30.1360.40">
    <property type="match status" value="1"/>
</dbReference>
<dbReference type="Gene3D" id="1.10.132.20">
    <property type="entry name" value="Ribosome-recycling factor"/>
    <property type="match status" value="1"/>
</dbReference>
<dbReference type="HAMAP" id="MF_00040">
    <property type="entry name" value="RRF"/>
    <property type="match status" value="1"/>
</dbReference>
<dbReference type="InterPro" id="IPR002661">
    <property type="entry name" value="Ribosome_recyc_fac"/>
</dbReference>
<dbReference type="InterPro" id="IPR023584">
    <property type="entry name" value="Ribosome_recyc_fac_dom"/>
</dbReference>
<dbReference type="InterPro" id="IPR036191">
    <property type="entry name" value="RRF_sf"/>
</dbReference>
<dbReference type="NCBIfam" id="TIGR00496">
    <property type="entry name" value="frr"/>
    <property type="match status" value="1"/>
</dbReference>
<dbReference type="PANTHER" id="PTHR20982:SF3">
    <property type="entry name" value="MITOCHONDRIAL RIBOSOME RECYCLING FACTOR PSEUDO 1"/>
    <property type="match status" value="1"/>
</dbReference>
<dbReference type="PANTHER" id="PTHR20982">
    <property type="entry name" value="RIBOSOME RECYCLING FACTOR"/>
    <property type="match status" value="1"/>
</dbReference>
<dbReference type="Pfam" id="PF01765">
    <property type="entry name" value="RRF"/>
    <property type="match status" value="1"/>
</dbReference>
<dbReference type="SUPFAM" id="SSF55194">
    <property type="entry name" value="Ribosome recycling factor, RRF"/>
    <property type="match status" value="1"/>
</dbReference>
<evidence type="ECO:0000255" key="1">
    <source>
        <dbReference type="HAMAP-Rule" id="MF_00040"/>
    </source>
</evidence>
<evidence type="ECO:0000256" key="2">
    <source>
        <dbReference type="SAM" id="MobiDB-lite"/>
    </source>
</evidence>
<sequence>MSTKDLEASMRKSLEATQRNFNTIRTGRANSSLLDRISVEYYGADTPLKSLATLSTPDSQTIQIQPFDISGLAAIEKAIAMSELGFTPNNDGKVIRINVPPLTEERRKEFCKMASKYAEEGKVALRNLRRDAIDKVKKQEKDGDFSEDQSRDEQDSVQKVLDKFIVELEKQLADKEAAILKV</sequence>
<keyword id="KW-0963">Cytoplasm</keyword>
<keyword id="KW-0648">Protein biosynthesis</keyword>
<keyword id="KW-1185">Reference proteome</keyword>
<organism>
    <name type="scientific">Synechococcus sp. (strain CC9902)</name>
    <dbReference type="NCBI Taxonomy" id="316279"/>
    <lineage>
        <taxon>Bacteria</taxon>
        <taxon>Bacillati</taxon>
        <taxon>Cyanobacteriota</taxon>
        <taxon>Cyanophyceae</taxon>
        <taxon>Synechococcales</taxon>
        <taxon>Synechococcaceae</taxon>
        <taxon>Synechococcus</taxon>
    </lineage>
</organism>